<evidence type="ECO:0000255" key="1">
    <source>
        <dbReference type="HAMAP-Rule" id="MF_00480"/>
    </source>
</evidence>
<evidence type="ECO:0000305" key="2"/>
<organism>
    <name type="scientific">Natranaerobius thermophilus (strain ATCC BAA-1301 / DSM 18059 / JW/NM-WN-LF)</name>
    <dbReference type="NCBI Taxonomy" id="457570"/>
    <lineage>
        <taxon>Bacteria</taxon>
        <taxon>Bacillati</taxon>
        <taxon>Bacillota</taxon>
        <taxon>Clostridia</taxon>
        <taxon>Natranaerobiales</taxon>
        <taxon>Natranaerobiaceae</taxon>
        <taxon>Natranaerobius</taxon>
    </lineage>
</organism>
<sequence length="156" mass="17819">MSRKGPAPKRDVNPDPIYNSKMVTKFINKLMLDGKKGLSQRIFYKALELVGERTNEEPLEVFETAVKNVMPVLEVKARRVGGATYQVPVEVEPNRKQVLAIRWIVNYARERGERAMSERLAGELIDAYNNTGGAIKKKEDTHKMAEANKAFAHYRW</sequence>
<name>RS7_NATTJ</name>
<accession>B2A4D5</accession>
<proteinExistence type="inferred from homology"/>
<dbReference type="EMBL" id="CP001034">
    <property type="protein sequence ID" value="ACB83789.1"/>
    <property type="molecule type" value="Genomic_DNA"/>
</dbReference>
<dbReference type="RefSeq" id="WP_012446679.1">
    <property type="nucleotide sequence ID" value="NC_010718.1"/>
</dbReference>
<dbReference type="SMR" id="B2A4D5"/>
<dbReference type="FunCoup" id="B2A4D5">
    <property type="interactions" value="426"/>
</dbReference>
<dbReference type="STRING" id="457570.Nther_0190"/>
<dbReference type="KEGG" id="nth:Nther_0190"/>
<dbReference type="eggNOG" id="COG0049">
    <property type="taxonomic scope" value="Bacteria"/>
</dbReference>
<dbReference type="HOGENOM" id="CLU_072226_1_1_9"/>
<dbReference type="InParanoid" id="B2A4D5"/>
<dbReference type="OrthoDB" id="9807653at2"/>
<dbReference type="Proteomes" id="UP000001683">
    <property type="component" value="Chromosome"/>
</dbReference>
<dbReference type="GO" id="GO:0015935">
    <property type="term" value="C:small ribosomal subunit"/>
    <property type="evidence" value="ECO:0007669"/>
    <property type="project" value="InterPro"/>
</dbReference>
<dbReference type="GO" id="GO:0019843">
    <property type="term" value="F:rRNA binding"/>
    <property type="evidence" value="ECO:0007669"/>
    <property type="project" value="UniProtKB-UniRule"/>
</dbReference>
<dbReference type="GO" id="GO:0003735">
    <property type="term" value="F:structural constituent of ribosome"/>
    <property type="evidence" value="ECO:0007669"/>
    <property type="project" value="InterPro"/>
</dbReference>
<dbReference type="GO" id="GO:0000049">
    <property type="term" value="F:tRNA binding"/>
    <property type="evidence" value="ECO:0007669"/>
    <property type="project" value="UniProtKB-UniRule"/>
</dbReference>
<dbReference type="GO" id="GO:0006412">
    <property type="term" value="P:translation"/>
    <property type="evidence" value="ECO:0007669"/>
    <property type="project" value="UniProtKB-UniRule"/>
</dbReference>
<dbReference type="CDD" id="cd14869">
    <property type="entry name" value="uS7_Bacteria"/>
    <property type="match status" value="1"/>
</dbReference>
<dbReference type="FunFam" id="1.10.455.10:FF:000001">
    <property type="entry name" value="30S ribosomal protein S7"/>
    <property type="match status" value="1"/>
</dbReference>
<dbReference type="Gene3D" id="1.10.455.10">
    <property type="entry name" value="Ribosomal protein S7 domain"/>
    <property type="match status" value="1"/>
</dbReference>
<dbReference type="HAMAP" id="MF_00480_B">
    <property type="entry name" value="Ribosomal_uS7_B"/>
    <property type="match status" value="1"/>
</dbReference>
<dbReference type="InterPro" id="IPR000235">
    <property type="entry name" value="Ribosomal_uS7"/>
</dbReference>
<dbReference type="InterPro" id="IPR005717">
    <property type="entry name" value="Ribosomal_uS7_bac/org-type"/>
</dbReference>
<dbReference type="InterPro" id="IPR020606">
    <property type="entry name" value="Ribosomal_uS7_CS"/>
</dbReference>
<dbReference type="InterPro" id="IPR023798">
    <property type="entry name" value="Ribosomal_uS7_dom"/>
</dbReference>
<dbReference type="InterPro" id="IPR036823">
    <property type="entry name" value="Ribosomal_uS7_dom_sf"/>
</dbReference>
<dbReference type="NCBIfam" id="TIGR01029">
    <property type="entry name" value="rpsG_bact"/>
    <property type="match status" value="1"/>
</dbReference>
<dbReference type="PANTHER" id="PTHR11205">
    <property type="entry name" value="RIBOSOMAL PROTEIN S7"/>
    <property type="match status" value="1"/>
</dbReference>
<dbReference type="Pfam" id="PF00177">
    <property type="entry name" value="Ribosomal_S7"/>
    <property type="match status" value="1"/>
</dbReference>
<dbReference type="PIRSF" id="PIRSF002122">
    <property type="entry name" value="RPS7p_RPS7a_RPS5e_RPS7o"/>
    <property type="match status" value="1"/>
</dbReference>
<dbReference type="SUPFAM" id="SSF47973">
    <property type="entry name" value="Ribosomal protein S7"/>
    <property type="match status" value="1"/>
</dbReference>
<dbReference type="PROSITE" id="PS00052">
    <property type="entry name" value="RIBOSOMAL_S7"/>
    <property type="match status" value="1"/>
</dbReference>
<protein>
    <recommendedName>
        <fullName evidence="1">Small ribosomal subunit protein uS7</fullName>
    </recommendedName>
    <alternativeName>
        <fullName evidence="2">30S ribosomal protein S7</fullName>
    </alternativeName>
</protein>
<gene>
    <name evidence="1" type="primary">rpsG</name>
    <name type="ordered locus">Nther_0190</name>
</gene>
<keyword id="KW-1185">Reference proteome</keyword>
<keyword id="KW-0687">Ribonucleoprotein</keyword>
<keyword id="KW-0689">Ribosomal protein</keyword>
<keyword id="KW-0694">RNA-binding</keyword>
<keyword id="KW-0699">rRNA-binding</keyword>
<keyword id="KW-0820">tRNA-binding</keyword>
<reference key="1">
    <citation type="submission" date="2008-04" db="EMBL/GenBank/DDBJ databases">
        <title>Complete sequence of chromosome of Natranaerobius thermophilus JW/NM-WN-LF.</title>
        <authorList>
            <consortium name="US DOE Joint Genome Institute"/>
            <person name="Copeland A."/>
            <person name="Lucas S."/>
            <person name="Lapidus A."/>
            <person name="Glavina del Rio T."/>
            <person name="Dalin E."/>
            <person name="Tice H."/>
            <person name="Bruce D."/>
            <person name="Goodwin L."/>
            <person name="Pitluck S."/>
            <person name="Chertkov O."/>
            <person name="Brettin T."/>
            <person name="Detter J.C."/>
            <person name="Han C."/>
            <person name="Kuske C.R."/>
            <person name="Schmutz J."/>
            <person name="Larimer F."/>
            <person name="Land M."/>
            <person name="Hauser L."/>
            <person name="Kyrpides N."/>
            <person name="Lykidis A."/>
            <person name="Mesbah N.M."/>
            <person name="Wiegel J."/>
        </authorList>
    </citation>
    <scope>NUCLEOTIDE SEQUENCE [LARGE SCALE GENOMIC DNA]</scope>
    <source>
        <strain>ATCC BAA-1301 / DSM 18059 / JW/NM-WN-LF</strain>
    </source>
</reference>
<comment type="function">
    <text evidence="1">One of the primary rRNA binding proteins, it binds directly to 16S rRNA where it nucleates assembly of the head domain of the 30S subunit. Is located at the subunit interface close to the decoding center, probably blocks exit of the E-site tRNA.</text>
</comment>
<comment type="subunit">
    <text evidence="1">Part of the 30S ribosomal subunit. Contacts proteins S9 and S11.</text>
</comment>
<comment type="similarity">
    <text evidence="1">Belongs to the universal ribosomal protein uS7 family.</text>
</comment>
<feature type="chain" id="PRO_1000125974" description="Small ribosomal subunit protein uS7">
    <location>
        <begin position="1"/>
        <end position="156"/>
    </location>
</feature>